<name>RS2_NITEU</name>
<evidence type="ECO:0000255" key="1">
    <source>
        <dbReference type="HAMAP-Rule" id="MF_00291"/>
    </source>
</evidence>
<evidence type="ECO:0000305" key="2"/>
<gene>
    <name evidence="1" type="primary">rpsB</name>
    <name type="ordered locus">NE1718</name>
</gene>
<sequence>MSVTMRQMLEAGVHFGHQTRFWNPKMAPYIFGQRNKIHIVNLEHTLVMLREALDYARRLTANKGTILFVGTKRQARDIVMEEAIRCGAPYVNQRWLGGMLTNFKTIRQSIKRLQDMEKMVQDGTLNKLTKKEALDFQRELEKLNNSLGGIKEMKGLPDAMFVIDVGYQKGAIVEADKLGIPVVGVVDTNHSPAGVRYVVPGNDDSSQAIRLYARAMADAILEGRNQSVQEIIEMSKSDDEIMSGRDQSAGA</sequence>
<protein>
    <recommendedName>
        <fullName evidence="1">Small ribosomal subunit protein uS2</fullName>
    </recommendedName>
    <alternativeName>
        <fullName evidence="2">30S ribosomal protein S2</fullName>
    </alternativeName>
</protein>
<feature type="chain" id="PRO_0000134206" description="Small ribosomal subunit protein uS2">
    <location>
        <begin position="1"/>
        <end position="251"/>
    </location>
</feature>
<organism>
    <name type="scientific">Nitrosomonas europaea (strain ATCC 19718 / CIP 103999 / KCTC 2705 / NBRC 14298)</name>
    <dbReference type="NCBI Taxonomy" id="228410"/>
    <lineage>
        <taxon>Bacteria</taxon>
        <taxon>Pseudomonadati</taxon>
        <taxon>Pseudomonadota</taxon>
        <taxon>Betaproteobacteria</taxon>
        <taxon>Nitrosomonadales</taxon>
        <taxon>Nitrosomonadaceae</taxon>
        <taxon>Nitrosomonas</taxon>
    </lineage>
</organism>
<accession>Q82TZ6</accession>
<comment type="similarity">
    <text evidence="1">Belongs to the universal ribosomal protein uS2 family.</text>
</comment>
<proteinExistence type="inferred from homology"/>
<reference key="1">
    <citation type="journal article" date="2003" name="J. Bacteriol.">
        <title>Complete genome sequence of the ammonia-oxidizing bacterium and obligate chemolithoautotroph Nitrosomonas europaea.</title>
        <authorList>
            <person name="Chain P."/>
            <person name="Lamerdin J.E."/>
            <person name="Larimer F.W."/>
            <person name="Regala W."/>
            <person name="Lao V."/>
            <person name="Land M.L."/>
            <person name="Hauser L."/>
            <person name="Hooper A.B."/>
            <person name="Klotz M.G."/>
            <person name="Norton J."/>
            <person name="Sayavedra-Soto L.A."/>
            <person name="Arciero D.M."/>
            <person name="Hommes N.G."/>
            <person name="Whittaker M.M."/>
            <person name="Arp D.J."/>
        </authorList>
    </citation>
    <scope>NUCLEOTIDE SEQUENCE [LARGE SCALE GENOMIC DNA]</scope>
    <source>
        <strain>ATCC 19718 / CIP 103999 / KCTC 2705 / NBRC 14298</strain>
    </source>
</reference>
<keyword id="KW-1185">Reference proteome</keyword>
<keyword id="KW-0687">Ribonucleoprotein</keyword>
<keyword id="KW-0689">Ribosomal protein</keyword>
<dbReference type="EMBL" id="AL954747">
    <property type="protein sequence ID" value="CAD85629.1"/>
    <property type="molecule type" value="Genomic_DNA"/>
</dbReference>
<dbReference type="RefSeq" id="WP_011112272.1">
    <property type="nucleotide sequence ID" value="NC_004757.1"/>
</dbReference>
<dbReference type="SMR" id="Q82TZ6"/>
<dbReference type="STRING" id="228410.NE1718"/>
<dbReference type="GeneID" id="87104878"/>
<dbReference type="KEGG" id="neu:NE1718"/>
<dbReference type="eggNOG" id="COG0052">
    <property type="taxonomic scope" value="Bacteria"/>
</dbReference>
<dbReference type="HOGENOM" id="CLU_040318_1_2_4"/>
<dbReference type="OrthoDB" id="9808036at2"/>
<dbReference type="PhylomeDB" id="Q82TZ6"/>
<dbReference type="Proteomes" id="UP000001416">
    <property type="component" value="Chromosome"/>
</dbReference>
<dbReference type="GO" id="GO:0022627">
    <property type="term" value="C:cytosolic small ribosomal subunit"/>
    <property type="evidence" value="ECO:0007669"/>
    <property type="project" value="TreeGrafter"/>
</dbReference>
<dbReference type="GO" id="GO:0003735">
    <property type="term" value="F:structural constituent of ribosome"/>
    <property type="evidence" value="ECO:0007669"/>
    <property type="project" value="InterPro"/>
</dbReference>
<dbReference type="GO" id="GO:0006412">
    <property type="term" value="P:translation"/>
    <property type="evidence" value="ECO:0007669"/>
    <property type="project" value="UniProtKB-UniRule"/>
</dbReference>
<dbReference type="CDD" id="cd01425">
    <property type="entry name" value="RPS2"/>
    <property type="match status" value="1"/>
</dbReference>
<dbReference type="FunFam" id="1.10.287.610:FF:000001">
    <property type="entry name" value="30S ribosomal protein S2"/>
    <property type="match status" value="1"/>
</dbReference>
<dbReference type="Gene3D" id="3.40.50.10490">
    <property type="entry name" value="Glucose-6-phosphate isomerase like protein, domain 1"/>
    <property type="match status" value="1"/>
</dbReference>
<dbReference type="Gene3D" id="1.10.287.610">
    <property type="entry name" value="Helix hairpin bin"/>
    <property type="match status" value="1"/>
</dbReference>
<dbReference type="HAMAP" id="MF_00291_B">
    <property type="entry name" value="Ribosomal_uS2_B"/>
    <property type="match status" value="1"/>
</dbReference>
<dbReference type="InterPro" id="IPR001865">
    <property type="entry name" value="Ribosomal_uS2"/>
</dbReference>
<dbReference type="InterPro" id="IPR005706">
    <property type="entry name" value="Ribosomal_uS2_bac/mit/plastid"/>
</dbReference>
<dbReference type="InterPro" id="IPR018130">
    <property type="entry name" value="Ribosomal_uS2_CS"/>
</dbReference>
<dbReference type="InterPro" id="IPR023591">
    <property type="entry name" value="Ribosomal_uS2_flav_dom_sf"/>
</dbReference>
<dbReference type="NCBIfam" id="TIGR01011">
    <property type="entry name" value="rpsB_bact"/>
    <property type="match status" value="1"/>
</dbReference>
<dbReference type="PANTHER" id="PTHR12534">
    <property type="entry name" value="30S RIBOSOMAL PROTEIN S2 PROKARYOTIC AND ORGANELLAR"/>
    <property type="match status" value="1"/>
</dbReference>
<dbReference type="PANTHER" id="PTHR12534:SF0">
    <property type="entry name" value="SMALL RIBOSOMAL SUBUNIT PROTEIN US2M"/>
    <property type="match status" value="1"/>
</dbReference>
<dbReference type="Pfam" id="PF00318">
    <property type="entry name" value="Ribosomal_S2"/>
    <property type="match status" value="1"/>
</dbReference>
<dbReference type="PRINTS" id="PR00395">
    <property type="entry name" value="RIBOSOMALS2"/>
</dbReference>
<dbReference type="SUPFAM" id="SSF52313">
    <property type="entry name" value="Ribosomal protein S2"/>
    <property type="match status" value="1"/>
</dbReference>
<dbReference type="PROSITE" id="PS00962">
    <property type="entry name" value="RIBOSOMAL_S2_1"/>
    <property type="match status" value="1"/>
</dbReference>